<evidence type="ECO:0000255" key="1">
    <source>
        <dbReference type="HAMAP-Rule" id="MF_00315"/>
    </source>
</evidence>
<keyword id="KW-0414">Isoprene biosynthesis</keyword>
<keyword id="KW-0460">Magnesium</keyword>
<keyword id="KW-0479">Metal-binding</keyword>
<keyword id="KW-0784">Thiamine biosynthesis</keyword>
<keyword id="KW-0786">Thiamine pyrophosphate</keyword>
<keyword id="KW-0808">Transferase</keyword>
<sequence length="640" mass="70668">MTYSLLPHIHSPQDLHALSLDKLPVLCDEIRNKIIESLSLTGGHLASNLGGVELTVALHYVFSSPDDQFIFDVGHQSYVHKLLTGRNTEAFSNIRHDNGLSGFTTPQESNHDIFFSGHAGNALSLALGLAKGSSNSSSHILPILGDAAFSCGLTLEALNNIPADLSKFIIVLNDNQMSISENVGNIPQGISQWIYPQKISKLSQKIHSWIQNLPSFLHKKKTLSHKVDIALKSLSHPLFEQFGLHYVGPIDGHNVKKLVQALQMIKDQPQPILFHVCTVKGNGLTEAERDPIRYHGVKAHFQNTSLKKTSGNVELQTPISFPQHAGNILCRLGKKYPQLQVVTPAMSLGSCLEDFRKQFPDRFTDVGIAEGHAVTFSAGIARSGTPVCCSIYSTFLHRAMDNVFHDVCMQELPVIFAIDRAGLAFHDGRSHHGIYDLGFLCSMPNMVICQPRNALVLERLFFSSLLWKSPCAIRYPNIPANEKASNSSFPFSPILPGEAEILCQGDDLLLIALGHMCNTALTVKEHLLDYGISTTVVDPIFIKPLDRKLLQSLLTHHSKVIILEEHSIHGGLGSEFLLFLNQHNIKADVLSLGVPDMFIPHGNPETILNLIGLTSDHITQRILSHFKFSTPIPIERFFKA</sequence>
<gene>
    <name evidence="1" type="primary">dxs</name>
    <name type="ordered locus">CTLon_0582</name>
</gene>
<dbReference type="EC" id="2.2.1.7" evidence="1"/>
<dbReference type="EMBL" id="AM884177">
    <property type="protein sequence ID" value="CAP06979.1"/>
    <property type="molecule type" value="Genomic_DNA"/>
</dbReference>
<dbReference type="RefSeq" id="WP_009873732.1">
    <property type="nucleotide sequence ID" value="NC_010280.2"/>
</dbReference>
<dbReference type="SMR" id="B0BBW4"/>
<dbReference type="KEGG" id="ctl:CTLon_0582"/>
<dbReference type="HOGENOM" id="CLU_009227_1_4_0"/>
<dbReference type="UniPathway" id="UPA00064">
    <property type="reaction ID" value="UER00091"/>
</dbReference>
<dbReference type="Proteomes" id="UP001154401">
    <property type="component" value="Chromosome"/>
</dbReference>
<dbReference type="GO" id="GO:0005829">
    <property type="term" value="C:cytosol"/>
    <property type="evidence" value="ECO:0007669"/>
    <property type="project" value="TreeGrafter"/>
</dbReference>
<dbReference type="GO" id="GO:0008661">
    <property type="term" value="F:1-deoxy-D-xylulose-5-phosphate synthase activity"/>
    <property type="evidence" value="ECO:0007669"/>
    <property type="project" value="UniProtKB-UniRule"/>
</dbReference>
<dbReference type="GO" id="GO:0000287">
    <property type="term" value="F:magnesium ion binding"/>
    <property type="evidence" value="ECO:0007669"/>
    <property type="project" value="UniProtKB-UniRule"/>
</dbReference>
<dbReference type="GO" id="GO:0030976">
    <property type="term" value="F:thiamine pyrophosphate binding"/>
    <property type="evidence" value="ECO:0007669"/>
    <property type="project" value="UniProtKB-UniRule"/>
</dbReference>
<dbReference type="GO" id="GO:0052865">
    <property type="term" value="P:1-deoxy-D-xylulose 5-phosphate biosynthetic process"/>
    <property type="evidence" value="ECO:0007669"/>
    <property type="project" value="UniProtKB-UniPathway"/>
</dbReference>
<dbReference type="GO" id="GO:0019288">
    <property type="term" value="P:isopentenyl diphosphate biosynthetic process, methylerythritol 4-phosphate pathway"/>
    <property type="evidence" value="ECO:0007669"/>
    <property type="project" value="TreeGrafter"/>
</dbReference>
<dbReference type="GO" id="GO:0016114">
    <property type="term" value="P:terpenoid biosynthetic process"/>
    <property type="evidence" value="ECO:0007669"/>
    <property type="project" value="UniProtKB-UniRule"/>
</dbReference>
<dbReference type="GO" id="GO:0009228">
    <property type="term" value="P:thiamine biosynthetic process"/>
    <property type="evidence" value="ECO:0007669"/>
    <property type="project" value="UniProtKB-UniRule"/>
</dbReference>
<dbReference type="CDD" id="cd02007">
    <property type="entry name" value="TPP_DXS"/>
    <property type="match status" value="1"/>
</dbReference>
<dbReference type="CDD" id="cd07033">
    <property type="entry name" value="TPP_PYR_DXS_TK_like"/>
    <property type="match status" value="1"/>
</dbReference>
<dbReference type="FunFam" id="3.40.50.920:FF:000002">
    <property type="entry name" value="1-deoxy-D-xylulose-5-phosphate synthase"/>
    <property type="match status" value="1"/>
</dbReference>
<dbReference type="FunFam" id="3.40.50.970:FF:000104">
    <property type="entry name" value="1-deoxy-D-xylulose-5-phosphate synthase"/>
    <property type="match status" value="1"/>
</dbReference>
<dbReference type="Gene3D" id="3.40.50.920">
    <property type="match status" value="1"/>
</dbReference>
<dbReference type="Gene3D" id="3.40.50.970">
    <property type="match status" value="2"/>
</dbReference>
<dbReference type="HAMAP" id="MF_00315">
    <property type="entry name" value="DXP_synth"/>
    <property type="match status" value="1"/>
</dbReference>
<dbReference type="InterPro" id="IPR005477">
    <property type="entry name" value="Dxylulose-5-P_synthase"/>
</dbReference>
<dbReference type="InterPro" id="IPR029061">
    <property type="entry name" value="THDP-binding"/>
</dbReference>
<dbReference type="InterPro" id="IPR009014">
    <property type="entry name" value="Transketo_C/PFOR_II"/>
</dbReference>
<dbReference type="InterPro" id="IPR005475">
    <property type="entry name" value="Transketolase-like_Pyr-bd"/>
</dbReference>
<dbReference type="InterPro" id="IPR033248">
    <property type="entry name" value="Transketolase_C"/>
</dbReference>
<dbReference type="InterPro" id="IPR049557">
    <property type="entry name" value="Transketolase_CS"/>
</dbReference>
<dbReference type="NCBIfam" id="TIGR00204">
    <property type="entry name" value="dxs"/>
    <property type="match status" value="1"/>
</dbReference>
<dbReference type="NCBIfam" id="NF003933">
    <property type="entry name" value="PRK05444.2-2"/>
    <property type="match status" value="1"/>
</dbReference>
<dbReference type="PANTHER" id="PTHR43322">
    <property type="entry name" value="1-D-DEOXYXYLULOSE 5-PHOSPHATE SYNTHASE-RELATED"/>
    <property type="match status" value="1"/>
</dbReference>
<dbReference type="PANTHER" id="PTHR43322:SF5">
    <property type="entry name" value="1-DEOXY-D-XYLULOSE-5-PHOSPHATE SYNTHASE, CHLOROPLASTIC"/>
    <property type="match status" value="1"/>
</dbReference>
<dbReference type="Pfam" id="PF13292">
    <property type="entry name" value="DXP_synthase_N"/>
    <property type="match status" value="1"/>
</dbReference>
<dbReference type="Pfam" id="PF02779">
    <property type="entry name" value="Transket_pyr"/>
    <property type="match status" value="1"/>
</dbReference>
<dbReference type="Pfam" id="PF02780">
    <property type="entry name" value="Transketolase_C"/>
    <property type="match status" value="1"/>
</dbReference>
<dbReference type="SMART" id="SM00861">
    <property type="entry name" value="Transket_pyr"/>
    <property type="match status" value="1"/>
</dbReference>
<dbReference type="SUPFAM" id="SSF52518">
    <property type="entry name" value="Thiamin diphosphate-binding fold (THDP-binding)"/>
    <property type="match status" value="2"/>
</dbReference>
<dbReference type="SUPFAM" id="SSF52922">
    <property type="entry name" value="TK C-terminal domain-like"/>
    <property type="match status" value="1"/>
</dbReference>
<dbReference type="PROSITE" id="PS00801">
    <property type="entry name" value="TRANSKETOLASE_1"/>
    <property type="match status" value="1"/>
</dbReference>
<organism>
    <name type="scientific">Chlamydia trachomatis serovar L2b (strain UCH-1/proctitis)</name>
    <dbReference type="NCBI Taxonomy" id="471473"/>
    <lineage>
        <taxon>Bacteria</taxon>
        <taxon>Pseudomonadati</taxon>
        <taxon>Chlamydiota</taxon>
        <taxon>Chlamydiia</taxon>
        <taxon>Chlamydiales</taxon>
        <taxon>Chlamydiaceae</taxon>
        <taxon>Chlamydia/Chlamydophila group</taxon>
        <taxon>Chlamydia</taxon>
    </lineage>
</organism>
<reference key="1">
    <citation type="journal article" date="2008" name="Genome Res.">
        <title>Chlamydia trachomatis: genome sequence analysis of lymphogranuloma venereum isolates.</title>
        <authorList>
            <person name="Thomson N.R."/>
            <person name="Holden M.T.G."/>
            <person name="Carder C."/>
            <person name="Lennard N."/>
            <person name="Lockey S.J."/>
            <person name="Marsh P."/>
            <person name="Skipp P."/>
            <person name="O'Connor C.D."/>
            <person name="Goodhead I."/>
            <person name="Norbertzcak H."/>
            <person name="Harris B."/>
            <person name="Ormond D."/>
            <person name="Rance R."/>
            <person name="Quail M.A."/>
            <person name="Parkhill J."/>
            <person name="Stephens R.S."/>
            <person name="Clarke I.N."/>
        </authorList>
    </citation>
    <scope>NUCLEOTIDE SEQUENCE [LARGE SCALE GENOMIC DNA]</scope>
    <source>
        <strain>UCH-1/proctitis</strain>
    </source>
</reference>
<proteinExistence type="inferred from homology"/>
<protein>
    <recommendedName>
        <fullName evidence="1">1-deoxy-D-xylulose-5-phosphate synthase</fullName>
        <ecNumber evidence="1">2.2.1.7</ecNumber>
    </recommendedName>
    <alternativeName>
        <fullName evidence="1">1-deoxyxylulose-5-phosphate synthase</fullName>
        <shortName evidence="1">DXP synthase</shortName>
        <shortName evidence="1">DXPS</shortName>
    </alternativeName>
</protein>
<accession>B0BBW4</accession>
<comment type="function">
    <text evidence="1">Catalyzes the acyloin condensation reaction between C atoms 2 and 3 of pyruvate and glyceraldehyde 3-phosphate to yield 1-deoxy-D-xylulose-5-phosphate (DXP).</text>
</comment>
<comment type="catalytic activity">
    <reaction evidence="1">
        <text>D-glyceraldehyde 3-phosphate + pyruvate + H(+) = 1-deoxy-D-xylulose 5-phosphate + CO2</text>
        <dbReference type="Rhea" id="RHEA:12605"/>
        <dbReference type="ChEBI" id="CHEBI:15361"/>
        <dbReference type="ChEBI" id="CHEBI:15378"/>
        <dbReference type="ChEBI" id="CHEBI:16526"/>
        <dbReference type="ChEBI" id="CHEBI:57792"/>
        <dbReference type="ChEBI" id="CHEBI:59776"/>
        <dbReference type="EC" id="2.2.1.7"/>
    </reaction>
</comment>
<comment type="cofactor">
    <cofactor evidence="1">
        <name>Mg(2+)</name>
        <dbReference type="ChEBI" id="CHEBI:18420"/>
    </cofactor>
    <text evidence="1">Binds 1 Mg(2+) ion per subunit.</text>
</comment>
<comment type="cofactor">
    <cofactor evidence="1">
        <name>thiamine diphosphate</name>
        <dbReference type="ChEBI" id="CHEBI:58937"/>
    </cofactor>
    <text evidence="1">Binds 1 thiamine pyrophosphate per subunit.</text>
</comment>
<comment type="pathway">
    <text evidence="1">Metabolic intermediate biosynthesis; 1-deoxy-D-xylulose 5-phosphate biosynthesis; 1-deoxy-D-xylulose 5-phosphate from D-glyceraldehyde 3-phosphate and pyruvate: step 1/1.</text>
</comment>
<comment type="subunit">
    <text evidence="1">Homodimer.</text>
</comment>
<comment type="similarity">
    <text evidence="1">Belongs to the transketolase family. DXPS subfamily.</text>
</comment>
<name>DXS_CHLTB</name>
<feature type="chain" id="PRO_1000115731" description="1-deoxy-D-xylulose-5-phosphate synthase">
    <location>
        <begin position="1"/>
        <end position="640"/>
    </location>
</feature>
<feature type="binding site" evidence="1">
    <location>
        <position position="75"/>
    </location>
    <ligand>
        <name>thiamine diphosphate</name>
        <dbReference type="ChEBI" id="CHEBI:58937"/>
    </ligand>
</feature>
<feature type="binding site" evidence="1">
    <location>
        <begin position="117"/>
        <end position="119"/>
    </location>
    <ligand>
        <name>thiamine diphosphate</name>
        <dbReference type="ChEBI" id="CHEBI:58937"/>
    </ligand>
</feature>
<feature type="binding site" evidence="1">
    <location>
        <position position="146"/>
    </location>
    <ligand>
        <name>Mg(2+)</name>
        <dbReference type="ChEBI" id="CHEBI:18420"/>
    </ligand>
</feature>
<feature type="binding site" evidence="1">
    <location>
        <begin position="147"/>
        <end position="148"/>
    </location>
    <ligand>
        <name>thiamine diphosphate</name>
        <dbReference type="ChEBI" id="CHEBI:58937"/>
    </ligand>
</feature>
<feature type="binding site" evidence="1">
    <location>
        <position position="175"/>
    </location>
    <ligand>
        <name>Mg(2+)</name>
        <dbReference type="ChEBI" id="CHEBI:18420"/>
    </ligand>
</feature>
<feature type="binding site" evidence="1">
    <location>
        <position position="175"/>
    </location>
    <ligand>
        <name>thiamine diphosphate</name>
        <dbReference type="ChEBI" id="CHEBI:58937"/>
    </ligand>
</feature>
<feature type="binding site" evidence="1">
    <location>
        <position position="370"/>
    </location>
    <ligand>
        <name>thiamine diphosphate</name>
        <dbReference type="ChEBI" id="CHEBI:58937"/>
    </ligand>
</feature>